<organism>
    <name type="scientific">Homo sapiens</name>
    <name type="common">Human</name>
    <dbReference type="NCBI Taxonomy" id="9606"/>
    <lineage>
        <taxon>Eukaryota</taxon>
        <taxon>Metazoa</taxon>
        <taxon>Chordata</taxon>
        <taxon>Craniata</taxon>
        <taxon>Vertebrata</taxon>
        <taxon>Euteleostomi</taxon>
        <taxon>Mammalia</taxon>
        <taxon>Eutheria</taxon>
        <taxon>Euarchontoglires</taxon>
        <taxon>Primates</taxon>
        <taxon>Haplorrhini</taxon>
        <taxon>Catarrhini</taxon>
        <taxon>Hominidae</taxon>
        <taxon>Homo</taxon>
    </lineage>
</organism>
<gene>
    <name type="primary">OAF</name>
    <name type="synonym">NS5ATP13TP2</name>
</gene>
<name>OAF_HUMAN</name>
<feature type="signal peptide" evidence="1">
    <location>
        <begin position="1"/>
        <end position="27"/>
    </location>
</feature>
<feature type="chain" id="PRO_0000292427" description="Out at first protein homolog">
    <location>
        <begin position="28"/>
        <end position="273"/>
    </location>
</feature>
<feature type="sequence variant" id="VAR_032993" description="In dbSNP:rs2508489.">
    <original>H</original>
    <variation>R</variation>
    <location>
        <position position="210"/>
    </location>
</feature>
<feature type="sequence variant" id="VAR_032994" description="In dbSNP:rs2508490.">
    <original>R</original>
    <variation>H</variation>
    <location>
        <position position="217"/>
    </location>
</feature>
<sequence length="273" mass="30688">MRLPGVPLARPALLLLLPLLAPLLGTGAPAELRVRVRLPDGQVTEESLQADSDADSISLELRKPDGTLVSFTADFKKDVKVFRALILGELEKGQSQFQALCFVTQLQHNEIIPSEAMAKLRQKNPRAVRQAEEVRGLEHLHMDVAVNFSQGALLSPHLHNVCAEAVDAIYTRQEDVRFWLEQGVDSSVFEALPKASEQAELPRCRQVGDHGKPCVCRYGLSLAWYPCMLKYCHSRDRPTPYKCGIRSCQKSYSFDFYVPQRQLCLWDEDPYPG</sequence>
<accession>Q86UD1</accession>
<reference key="1">
    <citation type="submission" date="2003-11" db="EMBL/GenBank/DDBJ databases">
        <title>Screening and cloning of the target genes transactivated by human gene 13 transactivated by nonstructural protein 5A of hepatitis C virus using suppression subtractive hybridization technique.</title>
        <authorList>
            <person name="Dang X."/>
            <person name="Cheng J."/>
            <person name="Deng H."/>
        </authorList>
    </citation>
    <scope>NUCLEOTIDE SEQUENCE [MRNA]</scope>
</reference>
<reference key="2">
    <citation type="journal article" date="2004" name="Genome Res.">
        <title>The status, quality, and expansion of the NIH full-length cDNA project: the Mammalian Gene Collection (MGC).</title>
        <authorList>
            <consortium name="The MGC Project Team"/>
        </authorList>
    </citation>
    <scope>NUCLEOTIDE SEQUENCE [LARGE SCALE MRNA]</scope>
    <source>
        <tissue>Brain</tissue>
    </source>
</reference>
<evidence type="ECO:0000255" key="1"/>
<evidence type="ECO:0000305" key="2"/>
<protein>
    <recommendedName>
        <fullName>Out at first protein homolog</fullName>
    </recommendedName>
    <alternativeName>
        <fullName>HCV NS5A-transactivated protein 13 target protein 2</fullName>
    </alternativeName>
</protein>
<comment type="similarity">
    <text evidence="2">Belongs to the OAF family.</text>
</comment>
<proteinExistence type="evidence at protein level"/>
<keyword id="KW-1267">Proteomics identification</keyword>
<keyword id="KW-1185">Reference proteome</keyword>
<keyword id="KW-0732">Signal</keyword>
<dbReference type="EMBL" id="AY459296">
    <property type="protein sequence ID" value="AAR23238.1"/>
    <property type="molecule type" value="mRNA"/>
</dbReference>
<dbReference type="EMBL" id="BC047726">
    <property type="protein sequence ID" value="AAH47726.1"/>
    <property type="molecule type" value="mRNA"/>
</dbReference>
<dbReference type="CCDS" id="CCDS8430.1"/>
<dbReference type="RefSeq" id="NP_848602.1">
    <property type="nucleotide sequence ID" value="NM_178507.4"/>
</dbReference>
<dbReference type="BioGRID" id="128640">
    <property type="interactions" value="138"/>
</dbReference>
<dbReference type="FunCoup" id="Q86UD1">
    <property type="interactions" value="593"/>
</dbReference>
<dbReference type="IntAct" id="Q86UD1">
    <property type="interactions" value="57"/>
</dbReference>
<dbReference type="STRING" id="9606.ENSP00000332613"/>
<dbReference type="GlyGen" id="Q86UD1">
    <property type="glycosylation" value="3 sites, 1 O-linked glycan (3 sites)"/>
</dbReference>
<dbReference type="iPTMnet" id="Q86UD1"/>
<dbReference type="PhosphoSitePlus" id="Q86UD1"/>
<dbReference type="BioMuta" id="OAF"/>
<dbReference type="DMDM" id="74727479"/>
<dbReference type="jPOST" id="Q86UD1"/>
<dbReference type="MassIVE" id="Q86UD1"/>
<dbReference type="PaxDb" id="9606-ENSP00000332613"/>
<dbReference type="PeptideAtlas" id="Q86UD1"/>
<dbReference type="ProteomicsDB" id="69800"/>
<dbReference type="Antibodypedia" id="49399">
    <property type="antibodies" value="83 antibodies from 21 providers"/>
</dbReference>
<dbReference type="DNASU" id="220323"/>
<dbReference type="Ensembl" id="ENST00000328965.9">
    <property type="protein sequence ID" value="ENSP00000332613.3"/>
    <property type="gene ID" value="ENSG00000184232.9"/>
</dbReference>
<dbReference type="GeneID" id="220323"/>
<dbReference type="KEGG" id="hsa:220323"/>
<dbReference type="MANE-Select" id="ENST00000328965.9">
    <property type="protein sequence ID" value="ENSP00000332613.3"/>
    <property type="RefSeq nucleotide sequence ID" value="NM_178507.4"/>
    <property type="RefSeq protein sequence ID" value="NP_848602.1"/>
</dbReference>
<dbReference type="UCSC" id="uc001pxb.4">
    <property type="organism name" value="human"/>
</dbReference>
<dbReference type="AGR" id="HGNC:28752"/>
<dbReference type="CTD" id="220323"/>
<dbReference type="DisGeNET" id="220323"/>
<dbReference type="GeneCards" id="OAF"/>
<dbReference type="HGNC" id="HGNC:28752">
    <property type="gene designation" value="OAF"/>
</dbReference>
<dbReference type="HPA" id="ENSG00000184232">
    <property type="expression patterns" value="Tissue enriched (liver)"/>
</dbReference>
<dbReference type="MIM" id="621070">
    <property type="type" value="gene"/>
</dbReference>
<dbReference type="neXtProt" id="NX_Q86UD1"/>
<dbReference type="OpenTargets" id="ENSG00000184232"/>
<dbReference type="PharmGKB" id="PA142671234"/>
<dbReference type="VEuPathDB" id="HostDB:ENSG00000184232"/>
<dbReference type="eggNOG" id="ENOG502QWDA">
    <property type="taxonomic scope" value="Eukaryota"/>
</dbReference>
<dbReference type="GeneTree" id="ENSGT00390000012008"/>
<dbReference type="HOGENOM" id="CLU_043995_1_0_1"/>
<dbReference type="InParanoid" id="Q86UD1"/>
<dbReference type="OMA" id="CHYGLSL"/>
<dbReference type="OrthoDB" id="5947176at2759"/>
<dbReference type="PAN-GO" id="Q86UD1">
    <property type="GO annotations" value="0 GO annotations based on evolutionary models"/>
</dbReference>
<dbReference type="PhylomeDB" id="Q86UD1"/>
<dbReference type="TreeFam" id="TF323953"/>
<dbReference type="PathwayCommons" id="Q86UD1"/>
<dbReference type="SignaLink" id="Q86UD1"/>
<dbReference type="BioGRID-ORCS" id="220323">
    <property type="hits" value="9 hits in 1152 CRISPR screens"/>
</dbReference>
<dbReference type="ChiTaRS" id="OAF">
    <property type="organism name" value="human"/>
</dbReference>
<dbReference type="GenomeRNAi" id="220323"/>
<dbReference type="Pharos" id="Q86UD1">
    <property type="development level" value="Tbio"/>
</dbReference>
<dbReference type="PRO" id="PR:Q86UD1"/>
<dbReference type="Proteomes" id="UP000005640">
    <property type="component" value="Chromosome 11"/>
</dbReference>
<dbReference type="RNAct" id="Q86UD1">
    <property type="molecule type" value="protein"/>
</dbReference>
<dbReference type="Bgee" id="ENSG00000184232">
    <property type="expression patterns" value="Expressed in right lobe of liver and 176 other cell types or tissues"/>
</dbReference>
<dbReference type="ExpressionAtlas" id="Q86UD1">
    <property type="expression patterns" value="baseline and differential"/>
</dbReference>
<dbReference type="InterPro" id="IPR026315">
    <property type="entry name" value="Oaf"/>
</dbReference>
<dbReference type="InterPro" id="IPR053897">
    <property type="entry name" value="Oaf_C"/>
</dbReference>
<dbReference type="InterPro" id="IPR053894">
    <property type="entry name" value="OAF_N"/>
</dbReference>
<dbReference type="PANTHER" id="PTHR13423">
    <property type="entry name" value="OUT AT FIRST"/>
    <property type="match status" value="1"/>
</dbReference>
<dbReference type="PANTHER" id="PTHR13423:SF2">
    <property type="entry name" value="OUT AT FIRST PROTEIN HOMOLOG"/>
    <property type="match status" value="1"/>
</dbReference>
<dbReference type="Pfam" id="PF22873">
    <property type="entry name" value="OAF_C"/>
    <property type="match status" value="1"/>
</dbReference>
<dbReference type="Pfam" id="PF14941">
    <property type="entry name" value="OAF_N"/>
    <property type="match status" value="1"/>
</dbReference>